<accession>G4ZLE6</accession>
<accession>L7WWG5</accession>
<reference key="1">
    <citation type="journal article" date="2013" name="Mol. Plant Microbe Interact.">
        <title>Deletion of the Phytophthora sojae avirulence gene Avr1d causes gain of virulence on Rps1d.</title>
        <authorList>
            <person name="Na R."/>
            <person name="Yu D."/>
            <person name="Qutob D."/>
            <person name="Zhao J."/>
            <person name="Gijzen M."/>
        </authorList>
    </citation>
    <scope>NUCLEOTIDE SEQUENCE [GENOMIC DNA]</scope>
    <scope>FUNCTION</scope>
    <scope>DISRUPTION PHENOTYPE</scope>
    <scope>PTDINS(4)P-BINDING</scope>
    <scope>MUTAGENESIS OF 48-ARG--ARG-51 AND 104-LYS--LYS-107</scope>
    <source>
        <strain>P6497</strain>
    </source>
</reference>
<reference key="2">
    <citation type="journal article" date="2006" name="Science">
        <title>Phytophthora genome sequences uncover evolutionary origins and mechanisms of pathogenesis.</title>
        <authorList>
            <person name="Tyler B.M."/>
            <person name="Tripathy S."/>
            <person name="Zhang X."/>
            <person name="Dehal P."/>
            <person name="Jiang R.H.Y."/>
            <person name="Aerts A."/>
            <person name="Arredondo F.D."/>
            <person name="Baxter L."/>
            <person name="Bensasson D."/>
            <person name="Beynon J.L."/>
            <person name="Chapman J."/>
            <person name="Damasceno C.M.B."/>
            <person name="Dorrance A.E."/>
            <person name="Dou D."/>
            <person name="Dickerman A.W."/>
            <person name="Dubchak I.L."/>
            <person name="Garbelotto M."/>
            <person name="Gijzen M."/>
            <person name="Gordon S.G."/>
            <person name="Govers F."/>
            <person name="Grunwald N.J."/>
            <person name="Huang W."/>
            <person name="Ivors K.L."/>
            <person name="Jones R.W."/>
            <person name="Kamoun S."/>
            <person name="Krampis K."/>
            <person name="Lamour K.H."/>
            <person name="Lee M.-K."/>
            <person name="McDonald W.H."/>
            <person name="Medina M."/>
            <person name="Meijer H.J.G."/>
            <person name="Nordberg E.K."/>
            <person name="Maclean D.J."/>
            <person name="Ospina-Giraldo M.D."/>
            <person name="Morris P.F."/>
            <person name="Phuntumart V."/>
            <person name="Putnam N.H."/>
            <person name="Rash S."/>
            <person name="Rose J.K.C."/>
            <person name="Sakihama Y."/>
            <person name="Salamov A.A."/>
            <person name="Savidor A."/>
            <person name="Scheuring C.F."/>
            <person name="Smith B.M."/>
            <person name="Sobral B.W.S."/>
            <person name="Terry A."/>
            <person name="Torto-Alalibo T.A."/>
            <person name="Win J."/>
            <person name="Xu Z."/>
            <person name="Zhang H."/>
            <person name="Grigoriev I.V."/>
            <person name="Rokhsar D.S."/>
            <person name="Boore J.L."/>
        </authorList>
    </citation>
    <scope>NUCLEOTIDE SEQUENCE [LARGE SCALE GENOMIC DNA]</scope>
    <source>
        <strain>P6497</strain>
    </source>
</reference>
<reference key="3">
    <citation type="journal article" date="2013" name="Mol. Plant Microbe Interact.">
        <title>The Phytophthora sojae Avr1d gene encodes an RxLR-dEER effector with presence and absence polymorphisms among pathogen strains.</title>
        <authorList>
            <person name="Yin W."/>
            <person name="Dong S."/>
            <person name="Zhai L."/>
            <person name="Lin Y."/>
            <person name="Zheng X."/>
            <person name="Wang Y."/>
        </authorList>
    </citation>
    <scope>FUNCTION</scope>
    <scope>INDUCTION</scope>
</reference>
<evidence type="ECO:0000255" key="1"/>
<evidence type="ECO:0000269" key="2">
    <source>
    </source>
</evidence>
<evidence type="ECO:0000269" key="3">
    <source>
    </source>
</evidence>
<evidence type="ECO:0000303" key="4">
    <source>
    </source>
</evidence>
<evidence type="ECO:0000305" key="5"/>
<evidence type="ECO:0000305" key="6">
    <source>
    </source>
</evidence>
<evidence type="ECO:0007829" key="7">
    <source>
        <dbReference type="PDB" id="7C96"/>
    </source>
</evidence>
<sequence length="125" mass="13979">MRLSSTTFVVLAAVLLASGTAVSKADETGVTNVNAVHSPNVLAGVDKRFLRSHHTEDGEAKLSNYDNEERNGLFGANTLSNMGKDTILRFQMFTKWKANGYLPKKIKDDIPRSLYKAYKIHYRMN</sequence>
<dbReference type="EMBL" id="KC004057">
    <property type="protein sequence ID" value="AGC92778.1"/>
    <property type="molecule type" value="Genomic_DNA"/>
</dbReference>
<dbReference type="EMBL" id="JH159155">
    <property type="protein sequence ID" value="EGZ16228.1"/>
    <property type="molecule type" value="Genomic_DNA"/>
</dbReference>
<dbReference type="PDB" id="7C96">
    <property type="method" value="X-ray"/>
    <property type="resolution" value="2.51 A"/>
    <property type="chains" value="A=71-125"/>
</dbReference>
<dbReference type="PDBsum" id="7C96"/>
<dbReference type="SMR" id="G4ZLE6"/>
<dbReference type="STRING" id="1094619.G4ZLE6"/>
<dbReference type="EnsemblProtists" id="EGZ16228">
    <property type="protein sequence ID" value="EGZ16228"/>
    <property type="gene ID" value="PHYSODRAFT_354880"/>
</dbReference>
<dbReference type="KEGG" id="psoj:PHYSODRAFT_354880"/>
<dbReference type="HOGENOM" id="CLU_1790698_0_0_1"/>
<dbReference type="InParanoid" id="G4ZLE6"/>
<dbReference type="OMA" id="RSHHTED"/>
<dbReference type="PHI-base" id="PHI:2941"/>
<dbReference type="PHI-base" id="PHI:2943"/>
<dbReference type="Proteomes" id="UP000002640">
    <property type="component" value="Unassembled WGS sequence"/>
</dbReference>
<dbReference type="GO" id="GO:0005576">
    <property type="term" value="C:extracellular region"/>
    <property type="evidence" value="ECO:0007669"/>
    <property type="project" value="UniProtKB-SubCell"/>
</dbReference>
<dbReference type="GO" id="GO:0043657">
    <property type="term" value="C:host cell"/>
    <property type="evidence" value="ECO:0007669"/>
    <property type="project" value="UniProtKB-SubCell"/>
</dbReference>
<dbReference type="InterPro" id="IPR031825">
    <property type="entry name" value="RXLR"/>
</dbReference>
<dbReference type="Pfam" id="PF16810">
    <property type="entry name" value="RXLR"/>
    <property type="match status" value="1"/>
</dbReference>
<keyword id="KW-0002">3D-structure</keyword>
<keyword id="KW-1185">Reference proteome</keyword>
<keyword id="KW-0964">Secreted</keyword>
<keyword id="KW-0732">Signal</keyword>
<keyword id="KW-0843">Virulence</keyword>
<proteinExistence type="evidence at protein level"/>
<protein>
    <recommendedName>
        <fullName evidence="4">RxLR effector protein Avh6</fullName>
    </recommendedName>
    <alternativeName>
        <fullName evidence="4">Avirulence homolog protein 6</fullName>
    </alternativeName>
    <alternativeName>
        <fullName evidence="4">Avirulence protein 1d</fullName>
    </alternativeName>
</protein>
<gene>
    <name evidence="4" type="primary">Avh6</name>
    <name evidence="4" type="synonym">Avh6-1</name>
    <name evidence="4" type="synonym">Avr1d</name>
</gene>
<name>AVH6_PHYSP</name>
<feature type="signal peptide" evidence="1">
    <location>
        <begin position="1"/>
        <end position="25"/>
    </location>
</feature>
<feature type="chain" id="PRO_5003472330" description="RxLR effector protein Avh6">
    <location>
        <begin position="26"/>
        <end position="125"/>
    </location>
</feature>
<feature type="short sequence motif" description="RxLR-dEER" evidence="6">
    <location>
        <begin position="48"/>
        <end position="70"/>
    </location>
</feature>
<feature type="mutagenesis site" description="Does not affect the phospholipid-binding properties." evidence="2">
    <original>RFLR</original>
    <variation>EEEE</variation>
    <location>
        <begin position="48"/>
        <end position="51"/>
    </location>
</feature>
<feature type="mutagenesis site" description="Drastically alters lipid-binding." evidence="2">
    <original>KKIK</original>
    <variation>EEEE</variation>
    <location>
        <begin position="104"/>
        <end position="107"/>
    </location>
</feature>
<feature type="helix" evidence="7">
    <location>
        <begin position="76"/>
        <end position="84"/>
    </location>
</feature>
<feature type="helix" evidence="7">
    <location>
        <begin position="86"/>
        <end position="98"/>
    </location>
</feature>
<feature type="helix" evidence="7">
    <location>
        <begin position="103"/>
        <end position="106"/>
    </location>
</feature>
<feature type="helix" evidence="7">
    <location>
        <begin position="112"/>
        <end position="124"/>
    </location>
</feature>
<comment type="function">
    <text evidence="2 3">Effector that suppresses plant defense responses during the early stages of pathogen infection. Suppresses cell death induced by effectors and PAMPs in plant hosts (PubMed:23550527). Triggers a hypersensitive response (HR) in the presence of Rps1d (PubMed:23550527, PubMed:23594349). Suppresses BAX-induced cell death and enhan,ced P.capsici infection in Nicotiana benthamiana. Also suppresses effector-triggered immunity induction by associating with Avr1b and Rps1b, suggesting a role in suppressing plant immunity (PubMed:23594349).</text>
</comment>
<comment type="subcellular location">
    <subcellularLocation>
        <location evidence="6">Secreted</location>
    </subcellularLocation>
    <subcellularLocation>
        <location evidence="6">Host cell</location>
    </subcellularLocation>
</comment>
<comment type="induction">
    <text evidence="3">Expression is induced in preinfection structures and during infection.</text>
</comment>
<comment type="domain">
    <text evidence="6">The RxLR-dEER motif acts to carry the protein into the host cell cytoplasm through binding to cell surface phosphatidylinositol-3-phosphate.</text>
</comment>
<comment type="disruption phenotype">
    <text evidence="2">Leads to the gain of virulence via impairing effector-triggered immunity (ETI) allowed by host resistance (R) protein Rps1d.</text>
</comment>
<comment type="miscellaneous">
    <text evidence="6">Avh6 is present in P.sojae strains that are avirulent on Rps1d hosts, whereas the gene is deleted from the genome of virulent strains.</text>
</comment>
<comment type="similarity">
    <text evidence="5">Belongs to the RxLR effector family.</text>
</comment>
<organism>
    <name type="scientific">Phytophthora sojae (strain P6497)</name>
    <name type="common">Soybean stem and root rot agent</name>
    <name type="synonym">Phytophthora megasperma f. sp. glycines</name>
    <dbReference type="NCBI Taxonomy" id="1094619"/>
    <lineage>
        <taxon>Eukaryota</taxon>
        <taxon>Sar</taxon>
        <taxon>Stramenopiles</taxon>
        <taxon>Oomycota</taxon>
        <taxon>Peronosporales</taxon>
        <taxon>Peronosporaceae</taxon>
        <taxon>Phytophthora</taxon>
    </lineage>
</organism>